<sequence length="234" mass="27428">MTENFILGRNNKLEHELKALADYINIPYSILQPYQSECFVRHYTKGQVIYFSPQESSNIYFLIEGNIIREHYNQNGDVYRYFNKEQVLFPISNLFHPKEVNELCTALTDCTVLGLPRELMAFLCKANDDIFLTLFALINDNEQQHMNYNMALTSKFAKDRIIKLLCHLCQTVGYDQDEFYEIKQFLTIQLMSDMAGISRETAGHIIHELKDEKLVVKDHKNWLVSKHLFNDVCV</sequence>
<accession>A7X715</accession>
<name>ARCR_STAA1</name>
<protein>
    <recommendedName>
        <fullName>HTH-type transcriptional regulator ArcR</fullName>
    </recommendedName>
</protein>
<comment type="function">
    <text evidence="1">Positively regulates the expression of the arcABDCR operon under anaerobic conditions, thus playing an essential role in arginine catabolism. May also control the expression of genes encoding proteins which are involved in anaerobic metabolism. Can bind cyclic AMP (By similarity).</text>
</comment>
<comment type="subcellular location">
    <subcellularLocation>
        <location evidence="1">Cytoplasm</location>
    </subcellularLocation>
</comment>
<keyword id="KW-0010">Activator</keyword>
<keyword id="KW-0114">cAMP</keyword>
<keyword id="KW-0116">cAMP-binding</keyword>
<keyword id="KW-0963">Cytoplasm</keyword>
<keyword id="KW-0238">DNA-binding</keyword>
<keyword id="KW-0547">Nucleotide-binding</keyword>
<keyword id="KW-0804">Transcription</keyword>
<keyword id="KW-0805">Transcription regulation</keyword>
<dbReference type="EMBL" id="AP009324">
    <property type="protein sequence ID" value="BAF79498.1"/>
    <property type="molecule type" value="Genomic_DNA"/>
</dbReference>
<dbReference type="RefSeq" id="WP_000138218.1">
    <property type="nucleotide sequence ID" value="NZ_CTYB01000011.1"/>
</dbReference>
<dbReference type="SMR" id="A7X715"/>
<dbReference type="KEGG" id="saw:SAHV_2615"/>
<dbReference type="HOGENOM" id="CLU_1160528_0_0_9"/>
<dbReference type="GO" id="GO:0005737">
    <property type="term" value="C:cytoplasm"/>
    <property type="evidence" value="ECO:0007669"/>
    <property type="project" value="UniProtKB-SubCell"/>
</dbReference>
<dbReference type="GO" id="GO:0030552">
    <property type="term" value="F:cAMP binding"/>
    <property type="evidence" value="ECO:0007669"/>
    <property type="project" value="UniProtKB-KW"/>
</dbReference>
<dbReference type="GO" id="GO:0003677">
    <property type="term" value="F:DNA binding"/>
    <property type="evidence" value="ECO:0007669"/>
    <property type="project" value="UniProtKB-KW"/>
</dbReference>
<dbReference type="GO" id="GO:0006355">
    <property type="term" value="P:regulation of DNA-templated transcription"/>
    <property type="evidence" value="ECO:0007669"/>
    <property type="project" value="InterPro"/>
</dbReference>
<dbReference type="Gene3D" id="2.60.120.10">
    <property type="entry name" value="Jelly Rolls"/>
    <property type="match status" value="1"/>
</dbReference>
<dbReference type="Gene3D" id="1.10.10.10">
    <property type="entry name" value="Winged helix-like DNA-binding domain superfamily/Winged helix DNA-binding domain"/>
    <property type="match status" value="1"/>
</dbReference>
<dbReference type="InterPro" id="IPR000595">
    <property type="entry name" value="cNMP-bd_dom"/>
</dbReference>
<dbReference type="InterPro" id="IPR018490">
    <property type="entry name" value="cNMP-bd_dom_sf"/>
</dbReference>
<dbReference type="InterPro" id="IPR012318">
    <property type="entry name" value="HTH_CRP"/>
</dbReference>
<dbReference type="InterPro" id="IPR014710">
    <property type="entry name" value="RmlC-like_jellyroll"/>
</dbReference>
<dbReference type="InterPro" id="IPR036388">
    <property type="entry name" value="WH-like_DNA-bd_sf"/>
</dbReference>
<dbReference type="InterPro" id="IPR036390">
    <property type="entry name" value="WH_DNA-bd_sf"/>
</dbReference>
<dbReference type="Pfam" id="PF00027">
    <property type="entry name" value="cNMP_binding"/>
    <property type="match status" value="1"/>
</dbReference>
<dbReference type="Pfam" id="PF13545">
    <property type="entry name" value="HTH_Crp_2"/>
    <property type="match status" value="1"/>
</dbReference>
<dbReference type="SUPFAM" id="SSF51206">
    <property type="entry name" value="cAMP-binding domain-like"/>
    <property type="match status" value="1"/>
</dbReference>
<dbReference type="SUPFAM" id="SSF46785">
    <property type="entry name" value="Winged helix' DNA-binding domain"/>
    <property type="match status" value="1"/>
</dbReference>
<dbReference type="PROSITE" id="PS51063">
    <property type="entry name" value="HTH_CRP_2"/>
    <property type="match status" value="1"/>
</dbReference>
<proteinExistence type="inferred from homology"/>
<organism>
    <name type="scientific">Staphylococcus aureus (strain Mu3 / ATCC 700698)</name>
    <dbReference type="NCBI Taxonomy" id="418127"/>
    <lineage>
        <taxon>Bacteria</taxon>
        <taxon>Bacillati</taxon>
        <taxon>Bacillota</taxon>
        <taxon>Bacilli</taxon>
        <taxon>Bacillales</taxon>
        <taxon>Staphylococcaceae</taxon>
        <taxon>Staphylococcus</taxon>
    </lineage>
</organism>
<feature type="chain" id="PRO_0000349410" description="HTH-type transcriptional regulator ArcR">
    <location>
        <begin position="1"/>
        <end position="234"/>
    </location>
</feature>
<feature type="domain" description="HTH crp-type" evidence="2">
    <location>
        <begin position="155"/>
        <end position="228"/>
    </location>
</feature>
<feature type="DNA-binding region" description="H-T-H motif" evidence="2">
    <location>
        <begin position="188"/>
        <end position="207"/>
    </location>
</feature>
<feature type="binding site">
    <location>
        <begin position="40"/>
        <end position="129"/>
    </location>
    <ligand>
        <name>a nucleoside 3',5'-cyclic phosphate</name>
        <dbReference type="ChEBI" id="CHEBI:58464"/>
    </ligand>
</feature>
<evidence type="ECO:0000250" key="1"/>
<evidence type="ECO:0000255" key="2">
    <source>
        <dbReference type="PROSITE-ProRule" id="PRU00387"/>
    </source>
</evidence>
<reference key="1">
    <citation type="journal article" date="2008" name="Antimicrob. Agents Chemother.">
        <title>Mutated response regulator graR is responsible for phenotypic conversion of Staphylococcus aureus from heterogeneous vancomycin-intermediate resistance to vancomycin-intermediate resistance.</title>
        <authorList>
            <person name="Neoh H.-M."/>
            <person name="Cui L."/>
            <person name="Yuzawa H."/>
            <person name="Takeuchi F."/>
            <person name="Matsuo M."/>
            <person name="Hiramatsu K."/>
        </authorList>
    </citation>
    <scope>NUCLEOTIDE SEQUENCE [LARGE SCALE GENOMIC DNA]</scope>
    <source>
        <strain>Mu3 / ATCC 700698</strain>
    </source>
</reference>
<gene>
    <name type="primary">arcR</name>
    <name type="ordered locus">SAHV_2615</name>
</gene>